<organism>
    <name type="scientific">Anaeromyxobacter sp. (strain Fw109-5)</name>
    <dbReference type="NCBI Taxonomy" id="404589"/>
    <lineage>
        <taxon>Bacteria</taxon>
        <taxon>Pseudomonadati</taxon>
        <taxon>Myxococcota</taxon>
        <taxon>Myxococcia</taxon>
        <taxon>Myxococcales</taxon>
        <taxon>Cystobacterineae</taxon>
        <taxon>Anaeromyxobacteraceae</taxon>
        <taxon>Anaeromyxobacter</taxon>
    </lineage>
</organism>
<sequence>MTTANVEQKVKNIIADQLGVGEDEIKITSSFIEDLGADSLDIVELVMAMEEEFEVEIPDEEAENIKTVQDAVNYITTHKK</sequence>
<comment type="function">
    <text evidence="1">Carrier of the growing fatty acid chain in fatty acid biosynthesis.</text>
</comment>
<comment type="pathway">
    <text evidence="1">Lipid metabolism; fatty acid biosynthesis.</text>
</comment>
<comment type="subcellular location">
    <subcellularLocation>
        <location evidence="1">Cytoplasm</location>
    </subcellularLocation>
</comment>
<comment type="PTM">
    <text evidence="1">4'-phosphopantetheine is transferred from CoA to a specific serine of apo-ACP by AcpS. This modification is essential for activity because fatty acids are bound in thioester linkage to the sulfhydryl of the prosthetic group.</text>
</comment>
<comment type="similarity">
    <text evidence="1">Belongs to the acyl carrier protein (ACP) family.</text>
</comment>
<gene>
    <name evidence="1" type="primary">acpP</name>
    <name type="ordered locus">Anae109_2736</name>
</gene>
<feature type="chain" id="PRO_1000066547" description="Acyl carrier protein">
    <location>
        <begin position="1"/>
        <end position="80"/>
    </location>
</feature>
<feature type="domain" description="Carrier" evidence="2">
    <location>
        <begin position="4"/>
        <end position="79"/>
    </location>
</feature>
<feature type="modified residue" description="O-(pantetheine 4'-phosphoryl)serine" evidence="2">
    <location>
        <position position="39"/>
    </location>
</feature>
<dbReference type="EMBL" id="CP000769">
    <property type="protein sequence ID" value="ABS26937.1"/>
    <property type="molecule type" value="Genomic_DNA"/>
</dbReference>
<dbReference type="RefSeq" id="WP_012097538.1">
    <property type="nucleotide sequence ID" value="NC_009675.1"/>
</dbReference>
<dbReference type="SMR" id="A7HDZ1"/>
<dbReference type="STRING" id="404589.Anae109_2736"/>
<dbReference type="KEGG" id="afw:Anae109_2736"/>
<dbReference type="eggNOG" id="COG0236">
    <property type="taxonomic scope" value="Bacteria"/>
</dbReference>
<dbReference type="HOGENOM" id="CLU_108696_5_1_7"/>
<dbReference type="OrthoDB" id="9804551at2"/>
<dbReference type="UniPathway" id="UPA00094"/>
<dbReference type="Proteomes" id="UP000006382">
    <property type="component" value="Chromosome"/>
</dbReference>
<dbReference type="GO" id="GO:0005829">
    <property type="term" value="C:cytosol"/>
    <property type="evidence" value="ECO:0007669"/>
    <property type="project" value="TreeGrafter"/>
</dbReference>
<dbReference type="GO" id="GO:0016020">
    <property type="term" value="C:membrane"/>
    <property type="evidence" value="ECO:0007669"/>
    <property type="project" value="GOC"/>
</dbReference>
<dbReference type="GO" id="GO:0000035">
    <property type="term" value="F:acyl binding"/>
    <property type="evidence" value="ECO:0007669"/>
    <property type="project" value="TreeGrafter"/>
</dbReference>
<dbReference type="GO" id="GO:0000036">
    <property type="term" value="F:acyl carrier activity"/>
    <property type="evidence" value="ECO:0007669"/>
    <property type="project" value="UniProtKB-UniRule"/>
</dbReference>
<dbReference type="GO" id="GO:0009245">
    <property type="term" value="P:lipid A biosynthetic process"/>
    <property type="evidence" value="ECO:0007669"/>
    <property type="project" value="TreeGrafter"/>
</dbReference>
<dbReference type="FunFam" id="1.10.1200.10:FF:000001">
    <property type="entry name" value="Acyl carrier protein"/>
    <property type="match status" value="1"/>
</dbReference>
<dbReference type="Gene3D" id="1.10.1200.10">
    <property type="entry name" value="ACP-like"/>
    <property type="match status" value="1"/>
</dbReference>
<dbReference type="HAMAP" id="MF_01217">
    <property type="entry name" value="Acyl_carrier"/>
    <property type="match status" value="1"/>
</dbReference>
<dbReference type="InterPro" id="IPR003231">
    <property type="entry name" value="ACP"/>
</dbReference>
<dbReference type="InterPro" id="IPR036736">
    <property type="entry name" value="ACP-like_sf"/>
</dbReference>
<dbReference type="InterPro" id="IPR009081">
    <property type="entry name" value="PP-bd_ACP"/>
</dbReference>
<dbReference type="InterPro" id="IPR006162">
    <property type="entry name" value="Ppantetheine_attach_site"/>
</dbReference>
<dbReference type="NCBIfam" id="TIGR00517">
    <property type="entry name" value="acyl_carrier"/>
    <property type="match status" value="1"/>
</dbReference>
<dbReference type="NCBIfam" id="NF002148">
    <property type="entry name" value="PRK00982.1-2"/>
    <property type="match status" value="1"/>
</dbReference>
<dbReference type="NCBIfam" id="NF002149">
    <property type="entry name" value="PRK00982.1-3"/>
    <property type="match status" value="1"/>
</dbReference>
<dbReference type="NCBIfam" id="NF002150">
    <property type="entry name" value="PRK00982.1-4"/>
    <property type="match status" value="1"/>
</dbReference>
<dbReference type="NCBIfam" id="NF002151">
    <property type="entry name" value="PRK00982.1-5"/>
    <property type="match status" value="1"/>
</dbReference>
<dbReference type="PANTHER" id="PTHR20863">
    <property type="entry name" value="ACYL CARRIER PROTEIN"/>
    <property type="match status" value="1"/>
</dbReference>
<dbReference type="PANTHER" id="PTHR20863:SF76">
    <property type="entry name" value="CARRIER DOMAIN-CONTAINING PROTEIN"/>
    <property type="match status" value="1"/>
</dbReference>
<dbReference type="Pfam" id="PF00550">
    <property type="entry name" value="PP-binding"/>
    <property type="match status" value="1"/>
</dbReference>
<dbReference type="SUPFAM" id="SSF47336">
    <property type="entry name" value="ACP-like"/>
    <property type="match status" value="1"/>
</dbReference>
<dbReference type="PROSITE" id="PS50075">
    <property type="entry name" value="CARRIER"/>
    <property type="match status" value="1"/>
</dbReference>
<dbReference type="PROSITE" id="PS00012">
    <property type="entry name" value="PHOSPHOPANTETHEINE"/>
    <property type="match status" value="1"/>
</dbReference>
<name>ACP_ANADF</name>
<accession>A7HDZ1</accession>
<reference key="1">
    <citation type="journal article" date="2015" name="Genome Announc.">
        <title>Complete genome sequence of Anaeromyxobacter sp. Fw109-5, an anaerobic, metal-reducing bacterium isolated from a contaminated subsurface environment.</title>
        <authorList>
            <person name="Hwang C."/>
            <person name="Copeland A."/>
            <person name="Lucas S."/>
            <person name="Lapidus A."/>
            <person name="Barry K."/>
            <person name="Glavina Del Rio T."/>
            <person name="Dalin E."/>
            <person name="Tice H."/>
            <person name="Pitluck S."/>
            <person name="Sims D."/>
            <person name="Brettin T."/>
            <person name="Bruce D.C."/>
            <person name="Detter J.C."/>
            <person name="Han C.S."/>
            <person name="Schmutz J."/>
            <person name="Larimer F.W."/>
            <person name="Land M.L."/>
            <person name="Hauser L.J."/>
            <person name="Kyrpides N."/>
            <person name="Lykidis A."/>
            <person name="Richardson P."/>
            <person name="Belieav A."/>
            <person name="Sanford R.A."/>
            <person name="Loeffler F.E."/>
            <person name="Fields M.W."/>
        </authorList>
    </citation>
    <scope>NUCLEOTIDE SEQUENCE [LARGE SCALE GENOMIC DNA]</scope>
    <source>
        <strain>Fw109-5</strain>
    </source>
</reference>
<protein>
    <recommendedName>
        <fullName evidence="1">Acyl carrier protein</fullName>
        <shortName evidence="1">ACP</shortName>
    </recommendedName>
</protein>
<evidence type="ECO:0000255" key="1">
    <source>
        <dbReference type="HAMAP-Rule" id="MF_01217"/>
    </source>
</evidence>
<evidence type="ECO:0000255" key="2">
    <source>
        <dbReference type="PROSITE-ProRule" id="PRU00258"/>
    </source>
</evidence>
<proteinExistence type="inferred from homology"/>
<keyword id="KW-0963">Cytoplasm</keyword>
<keyword id="KW-0275">Fatty acid biosynthesis</keyword>
<keyword id="KW-0276">Fatty acid metabolism</keyword>
<keyword id="KW-0444">Lipid biosynthesis</keyword>
<keyword id="KW-0443">Lipid metabolism</keyword>
<keyword id="KW-0596">Phosphopantetheine</keyword>
<keyword id="KW-0597">Phosphoprotein</keyword>
<keyword id="KW-1185">Reference proteome</keyword>